<keyword id="KW-0002">3D-structure</keyword>
<keyword id="KW-0378">Hydrolase</keyword>
<keyword id="KW-0645">Protease</keyword>
<keyword id="KW-1185">Reference proteome</keyword>
<keyword id="KW-0964">Secreted</keyword>
<keyword id="KW-0732">Signal</keyword>
<keyword id="KW-0843">Virulence</keyword>
<gene>
    <name evidence="1" type="primary">ssl1</name>
    <name type="ordered locus">SAOUHSC_00383</name>
</gene>
<organism>
    <name type="scientific">Staphylococcus aureus (strain NCTC 8325 / PS 47)</name>
    <dbReference type="NCBI Taxonomy" id="93061"/>
    <lineage>
        <taxon>Bacteria</taxon>
        <taxon>Bacillati</taxon>
        <taxon>Bacillota</taxon>
        <taxon>Bacilli</taxon>
        <taxon>Bacillales</taxon>
        <taxon>Staphylococcaceae</taxon>
        <taxon>Staphylococcus</taxon>
    </lineage>
</organism>
<name>SSL1_STAA8</name>
<proteinExistence type="evidence at protein level"/>
<sequence>MKFKAIAKASLALGMLATGVITSNVQSVQAKAEVKQQSESELKHYYNKPILERKNVTGFKYTDEGKHYLEVTVGQQHSRITLLGSDKDKFKDGENSNIDVFILREGDSRQATNYSIGGVTKSNSVQYIDYINTPILEIKKDNEDVLKDFYYISKEDISLKELDYRLRERAIKQHGLYSNGLKQGQITITMNDGTTHTIDLSQKLEKERMGESIDGTKINKILVEMK</sequence>
<comment type="function">
    <text evidence="1">Mediates virulence by proteolytically cleaving host proteins, including collagens types I and IV as well as human cytokines IL8, IL17A, and IFN-gamma.</text>
</comment>
<comment type="subunit">
    <text evidence="1">Homodimer.</text>
</comment>
<comment type="subcellular location">
    <subcellularLocation>
        <location evidence="2">Secreted</location>
    </subcellularLocation>
</comment>
<comment type="similarity">
    <text evidence="4">Belongs to the staphylococcal/streptococcal toxin family.</text>
</comment>
<reference key="1">
    <citation type="book" date="2006" name="Gram positive pathogens, 2nd edition">
        <title>The Staphylococcus aureus NCTC 8325 genome.</title>
        <editorList>
            <person name="Fischetti V."/>
            <person name="Novick R."/>
            <person name="Ferretti J."/>
            <person name="Portnoy D."/>
            <person name="Rood J."/>
        </editorList>
        <authorList>
            <person name="Gillaspy A.F."/>
            <person name="Worrell V."/>
            <person name="Orvis J."/>
            <person name="Roe B.A."/>
            <person name="Dyer D.W."/>
            <person name="Iandolo J.J."/>
        </authorList>
    </citation>
    <scope>NUCLEOTIDE SEQUENCE [LARGE SCALE GENOMIC DNA]</scope>
    <source>
        <strain>NCTC 8325 / PS 47</strain>
    </source>
</reference>
<reference key="2">
    <citation type="submission" date="2013-12" db="PDB data bank">
        <title>Crystal structure of Staphylococcal superantigen-like protein SAOUHSC_00383.</title>
        <authorList>
            <person name="Dutta D."/>
            <person name="Dutta A."/>
            <person name="Basak A."/>
            <person name="Das A.K."/>
        </authorList>
    </citation>
    <scope>X-RAY CRYSTALLOGRAPHY (2.50 ANGSTROMS) OF 26-226</scope>
</reference>
<accession>Q2G0X9</accession>
<dbReference type="EC" id="3.4.21.-" evidence="1"/>
<dbReference type="EMBL" id="CP000253">
    <property type="protein sequence ID" value="ABD29548.1"/>
    <property type="molecule type" value="Genomic_DNA"/>
</dbReference>
<dbReference type="RefSeq" id="WP_000669005.1">
    <property type="nucleotide sequence ID" value="NZ_LS483365.1"/>
</dbReference>
<dbReference type="RefSeq" id="YP_498971.1">
    <property type="nucleotide sequence ID" value="NC_007795.1"/>
</dbReference>
<dbReference type="PDB" id="4O1N">
    <property type="method" value="X-ray"/>
    <property type="resolution" value="2.50 A"/>
    <property type="chains" value="A/B/C/D/E/F=26-226"/>
</dbReference>
<dbReference type="PDBsum" id="4O1N"/>
<dbReference type="SMR" id="Q2G0X9"/>
<dbReference type="STRING" id="93061.SAOUHSC_00383"/>
<dbReference type="PaxDb" id="1280-SAXN108_0476"/>
<dbReference type="GeneID" id="3919120"/>
<dbReference type="KEGG" id="sao:SAOUHSC_00383"/>
<dbReference type="PATRIC" id="fig|93061.5.peg.353"/>
<dbReference type="eggNOG" id="ENOG503054K">
    <property type="taxonomic scope" value="Bacteria"/>
</dbReference>
<dbReference type="HOGENOM" id="CLU_054950_1_0_9"/>
<dbReference type="OrthoDB" id="2413502at2"/>
<dbReference type="EvolutionaryTrace" id="Q2G0X9"/>
<dbReference type="Proteomes" id="UP000008816">
    <property type="component" value="Chromosome"/>
</dbReference>
<dbReference type="GO" id="GO:0005576">
    <property type="term" value="C:extracellular region"/>
    <property type="evidence" value="ECO:0007669"/>
    <property type="project" value="UniProtKB-SubCell"/>
</dbReference>
<dbReference type="GO" id="GO:0008233">
    <property type="term" value="F:peptidase activity"/>
    <property type="evidence" value="ECO:0007669"/>
    <property type="project" value="UniProtKB-KW"/>
</dbReference>
<dbReference type="GO" id="GO:0006508">
    <property type="term" value="P:proteolysis"/>
    <property type="evidence" value="ECO:0007669"/>
    <property type="project" value="UniProtKB-KW"/>
</dbReference>
<dbReference type="Gene3D" id="2.40.50.110">
    <property type="match status" value="1"/>
</dbReference>
<dbReference type="Gene3D" id="3.10.20.120">
    <property type="match status" value="1"/>
</dbReference>
<dbReference type="InterPro" id="IPR008992">
    <property type="entry name" value="Enterotoxin"/>
</dbReference>
<dbReference type="InterPro" id="IPR015282">
    <property type="entry name" value="SSL_OB"/>
</dbReference>
<dbReference type="InterPro" id="IPR008375">
    <property type="entry name" value="Staph_exotoxin"/>
</dbReference>
<dbReference type="InterPro" id="IPR016091">
    <property type="entry name" value="SuperAg_toxin_C"/>
</dbReference>
<dbReference type="InterPro" id="IPR013307">
    <property type="entry name" value="Superantigen_bac"/>
</dbReference>
<dbReference type="InterPro" id="IPR006123">
    <property type="entry name" value="Toxin_b-grasp_Staph/Strep"/>
</dbReference>
<dbReference type="NCBIfam" id="NF009595">
    <property type="entry name" value="PRK13037.1"/>
    <property type="match status" value="1"/>
</dbReference>
<dbReference type="Pfam" id="PF09199">
    <property type="entry name" value="SSL_OB"/>
    <property type="match status" value="1"/>
</dbReference>
<dbReference type="Pfam" id="PF02876">
    <property type="entry name" value="Stap_Strp_tox_C"/>
    <property type="match status" value="1"/>
</dbReference>
<dbReference type="PRINTS" id="PR01898">
    <property type="entry name" value="SAGSUPRFAMLY"/>
</dbReference>
<dbReference type="PRINTS" id="PR01800">
    <property type="entry name" value="STAPHEXOTOXN"/>
</dbReference>
<dbReference type="PRINTS" id="PR01501">
    <property type="entry name" value="TOXICSSTOXIN"/>
</dbReference>
<dbReference type="SUPFAM" id="SSF50203">
    <property type="entry name" value="Bacterial enterotoxins"/>
    <property type="match status" value="1"/>
</dbReference>
<dbReference type="SUPFAM" id="SSF54334">
    <property type="entry name" value="Superantigen toxins, C-terminal domain"/>
    <property type="match status" value="1"/>
</dbReference>
<evidence type="ECO:0000250" key="1">
    <source>
        <dbReference type="UniProtKB" id="A0A0H3KAV3"/>
    </source>
</evidence>
<evidence type="ECO:0000250" key="2">
    <source>
        <dbReference type="UniProtKB" id="Q2G1S8"/>
    </source>
</evidence>
<evidence type="ECO:0000255" key="3"/>
<evidence type="ECO:0000305" key="4"/>
<evidence type="ECO:0007829" key="5">
    <source>
        <dbReference type="PDB" id="4O1N"/>
    </source>
</evidence>
<feature type="signal peptide" evidence="3">
    <location>
        <begin position="1"/>
        <end position="30"/>
    </location>
</feature>
<feature type="chain" id="PRO_5004207693" description="Staphylococcal superantigen-like 1" evidence="3">
    <location>
        <begin position="31"/>
        <end position="226"/>
    </location>
</feature>
<feature type="helix" evidence="5">
    <location>
        <begin position="39"/>
        <end position="46"/>
    </location>
</feature>
<feature type="strand" evidence="5">
    <location>
        <begin position="51"/>
        <end position="63"/>
    </location>
</feature>
<feature type="strand" evidence="5">
    <location>
        <begin position="66"/>
        <end position="73"/>
    </location>
</feature>
<feature type="strand" evidence="5">
    <location>
        <begin position="76"/>
        <end position="81"/>
    </location>
</feature>
<feature type="helix" evidence="5">
    <location>
        <begin position="86"/>
        <end position="89"/>
    </location>
</feature>
<feature type="strand" evidence="5">
    <location>
        <begin position="92"/>
        <end position="102"/>
    </location>
</feature>
<feature type="strand" evidence="5">
    <location>
        <begin position="111"/>
        <end position="116"/>
    </location>
</feature>
<feature type="strand" evidence="5">
    <location>
        <begin position="119"/>
        <end position="121"/>
    </location>
</feature>
<feature type="strand" evidence="5">
    <location>
        <begin position="135"/>
        <end position="140"/>
    </location>
</feature>
<feature type="strand" evidence="5">
    <location>
        <begin position="143"/>
        <end position="149"/>
    </location>
</feature>
<feature type="strand" evidence="5">
    <location>
        <begin position="155"/>
        <end position="158"/>
    </location>
</feature>
<feature type="helix" evidence="5">
    <location>
        <begin position="159"/>
        <end position="174"/>
    </location>
</feature>
<feature type="strand" evidence="5">
    <location>
        <begin position="186"/>
        <end position="190"/>
    </location>
</feature>
<feature type="strand" evidence="5">
    <location>
        <begin position="195"/>
        <end position="198"/>
    </location>
</feature>
<feature type="helix" evidence="5">
    <location>
        <begin position="206"/>
        <end position="208"/>
    </location>
</feature>
<feature type="strand" evidence="5">
    <location>
        <begin position="212"/>
        <end position="214"/>
    </location>
</feature>
<feature type="helix" evidence="5">
    <location>
        <begin position="215"/>
        <end position="217"/>
    </location>
</feature>
<feature type="strand" evidence="5">
    <location>
        <begin position="218"/>
        <end position="225"/>
    </location>
</feature>
<protein>
    <recommendedName>
        <fullName>Staphylococcal superantigen-like 1</fullName>
        <ecNumber evidence="1">3.4.21.-</ecNumber>
    </recommendedName>
</protein>